<keyword id="KW-0001">2Fe-2S</keyword>
<keyword id="KW-0028">Amino-acid biosynthesis</keyword>
<keyword id="KW-0100">Branched-chain amino acid biosynthesis</keyword>
<keyword id="KW-0408">Iron</keyword>
<keyword id="KW-0411">Iron-sulfur</keyword>
<keyword id="KW-0456">Lyase</keyword>
<keyword id="KW-0460">Magnesium</keyword>
<keyword id="KW-0479">Metal-binding</keyword>
<organism>
    <name type="scientific">Saccharolobus islandicus (strain Y.N.15.51 / Yellowstone #2)</name>
    <name type="common">Sulfolobus islandicus</name>
    <dbReference type="NCBI Taxonomy" id="419942"/>
    <lineage>
        <taxon>Archaea</taxon>
        <taxon>Thermoproteota</taxon>
        <taxon>Thermoprotei</taxon>
        <taxon>Sulfolobales</taxon>
        <taxon>Sulfolobaceae</taxon>
        <taxon>Saccharolobus</taxon>
    </lineage>
</organism>
<evidence type="ECO:0000255" key="1">
    <source>
        <dbReference type="HAMAP-Rule" id="MF_00012"/>
    </source>
</evidence>
<proteinExistence type="inferred from homology"/>
<sequence>MPAKLNSPSRYHGIYNAPHRAFLRSVGLTDEEIGKPLVAIATAWSEAGPCNFHTLALARVAKEGTKEAGLSPLAFPTMVVNDNIGMGSEGMRYSLVSRDLIADMVEAQFNAHAFDGLVGIGGCDKTTPGILMAMARLNVPSIYIYGGSAEPGYFMGKRLTIEDVHEAIGAYLAKRITENELYEIEKRAHPTLGTCSGLFTANTMGSMSEALGMALPGSASPTATSSRRVMYVKETGKALGSLIENGIKSREILTFEAFENAITTLMAMGGSTNAVLHLLAIAYEAGVKLTLDDFNRISKRTPYIASMKPGGDYVMADLDEVGGVPVVLKKLLDAGLLHGDVLTVTGKTMKQNLEQYKYPNVPHSHIVRDVKNPIKPRGGIVILKGSLAPEGAVIKVAATNVVKFEGKAKVYNSEDDAFKGVQSGEVSEGEVVIIRYEGPKGAPGMPEMLRVTAAIMGAGLNNVALVTDGRFSGATRGPMVGHVAPEAMVGGPIAIVEDGDTIVIDVESERLDLKLSEEEIKNRLKRWSPPSPRYKSGLLAKYASLVSQASMGAVTRPA</sequence>
<comment type="function">
    <text evidence="1">Functions in the biosynthesis of branched-chain amino acids. Catalyzes the dehydration of (2R,3R)-2,3-dihydroxy-3-methylpentanoate (2,3-dihydroxy-3-methylvalerate) into 2-oxo-3-methylpentanoate (2-oxo-3-methylvalerate) and of (2R)-2,3-dihydroxy-3-methylbutanoate (2,3-dihydroxyisovalerate) into 2-oxo-3-methylbutanoate (2-oxoisovalerate), the penultimate precursor to L-isoleucine and L-valine, respectively.</text>
</comment>
<comment type="catalytic activity">
    <reaction evidence="1">
        <text>(2R)-2,3-dihydroxy-3-methylbutanoate = 3-methyl-2-oxobutanoate + H2O</text>
        <dbReference type="Rhea" id="RHEA:24809"/>
        <dbReference type="ChEBI" id="CHEBI:11851"/>
        <dbReference type="ChEBI" id="CHEBI:15377"/>
        <dbReference type="ChEBI" id="CHEBI:49072"/>
        <dbReference type="EC" id="4.2.1.9"/>
    </reaction>
    <physiologicalReaction direction="left-to-right" evidence="1">
        <dbReference type="Rhea" id="RHEA:24810"/>
    </physiologicalReaction>
</comment>
<comment type="catalytic activity">
    <reaction evidence="1">
        <text>(2R,3R)-2,3-dihydroxy-3-methylpentanoate = (S)-3-methyl-2-oxopentanoate + H2O</text>
        <dbReference type="Rhea" id="RHEA:27694"/>
        <dbReference type="ChEBI" id="CHEBI:15377"/>
        <dbReference type="ChEBI" id="CHEBI:35146"/>
        <dbReference type="ChEBI" id="CHEBI:49258"/>
        <dbReference type="EC" id="4.2.1.9"/>
    </reaction>
    <physiologicalReaction direction="left-to-right" evidence="1">
        <dbReference type="Rhea" id="RHEA:27695"/>
    </physiologicalReaction>
</comment>
<comment type="cofactor">
    <cofactor evidence="1">
        <name>[2Fe-2S] cluster</name>
        <dbReference type="ChEBI" id="CHEBI:190135"/>
    </cofactor>
    <text evidence="1">Binds 1 [2Fe-2S] cluster per subunit. This cluster acts as a Lewis acid cofactor.</text>
</comment>
<comment type="cofactor">
    <cofactor evidence="1">
        <name>Mg(2+)</name>
        <dbReference type="ChEBI" id="CHEBI:18420"/>
    </cofactor>
</comment>
<comment type="pathway">
    <text evidence="1">Amino-acid biosynthesis; L-isoleucine biosynthesis; L-isoleucine from 2-oxobutanoate: step 3/4.</text>
</comment>
<comment type="pathway">
    <text evidence="1">Amino-acid biosynthesis; L-valine biosynthesis; L-valine from pyruvate: step 3/4.</text>
</comment>
<comment type="subunit">
    <text evidence="1">Homodimer.</text>
</comment>
<comment type="similarity">
    <text evidence="1">Belongs to the IlvD/Edd family.</text>
</comment>
<protein>
    <recommendedName>
        <fullName evidence="1">Dihydroxy-acid dehydratase</fullName>
        <shortName evidence="1">DAD</shortName>
        <ecNumber evidence="1">4.2.1.9</ecNumber>
    </recommendedName>
</protein>
<feature type="chain" id="PRO_1000201787" description="Dihydroxy-acid dehydratase">
    <location>
        <begin position="1"/>
        <end position="558"/>
    </location>
</feature>
<feature type="active site" description="Proton acceptor" evidence="1">
    <location>
        <position position="472"/>
    </location>
</feature>
<feature type="binding site" evidence="1">
    <location>
        <position position="50"/>
    </location>
    <ligand>
        <name>[2Fe-2S] cluster</name>
        <dbReference type="ChEBI" id="CHEBI:190135"/>
    </ligand>
</feature>
<feature type="binding site" evidence="1">
    <location>
        <position position="82"/>
    </location>
    <ligand>
        <name>Mg(2+)</name>
        <dbReference type="ChEBI" id="CHEBI:18420"/>
    </ligand>
</feature>
<feature type="binding site" evidence="1">
    <location>
        <position position="123"/>
    </location>
    <ligand>
        <name>[2Fe-2S] cluster</name>
        <dbReference type="ChEBI" id="CHEBI:190135"/>
    </ligand>
</feature>
<feature type="binding site" evidence="1">
    <location>
        <position position="124"/>
    </location>
    <ligand>
        <name>Mg(2+)</name>
        <dbReference type="ChEBI" id="CHEBI:18420"/>
    </ligand>
</feature>
<feature type="binding site" description="via carbamate group" evidence="1">
    <location>
        <position position="125"/>
    </location>
    <ligand>
        <name>Mg(2+)</name>
        <dbReference type="ChEBI" id="CHEBI:18420"/>
    </ligand>
</feature>
<feature type="binding site" evidence="1">
    <location>
        <position position="195"/>
    </location>
    <ligand>
        <name>[2Fe-2S] cluster</name>
        <dbReference type="ChEBI" id="CHEBI:190135"/>
    </ligand>
</feature>
<feature type="binding site" evidence="1">
    <location>
        <position position="447"/>
    </location>
    <ligand>
        <name>Mg(2+)</name>
        <dbReference type="ChEBI" id="CHEBI:18420"/>
    </ligand>
</feature>
<feature type="modified residue" description="N6-carboxylysine" evidence="1">
    <location>
        <position position="125"/>
    </location>
</feature>
<name>ILVD_SACI1</name>
<dbReference type="EC" id="4.2.1.9" evidence="1"/>
<dbReference type="EMBL" id="CP001404">
    <property type="protein sequence ID" value="ACP47666.1"/>
    <property type="molecule type" value="Genomic_DNA"/>
</dbReference>
<dbReference type="RefSeq" id="WP_009990927.1">
    <property type="nucleotide sequence ID" value="NC_012623.1"/>
</dbReference>
<dbReference type="SMR" id="C3NLR8"/>
<dbReference type="GeneID" id="7810155"/>
<dbReference type="KEGG" id="sin:YN1551_0517"/>
<dbReference type="HOGENOM" id="CLU_014271_4_2_2"/>
<dbReference type="UniPathway" id="UPA00047">
    <property type="reaction ID" value="UER00057"/>
</dbReference>
<dbReference type="UniPathway" id="UPA00049">
    <property type="reaction ID" value="UER00061"/>
</dbReference>
<dbReference type="Proteomes" id="UP000006818">
    <property type="component" value="Chromosome"/>
</dbReference>
<dbReference type="GO" id="GO:0051537">
    <property type="term" value="F:2 iron, 2 sulfur cluster binding"/>
    <property type="evidence" value="ECO:0007669"/>
    <property type="project" value="UniProtKB-UniRule"/>
</dbReference>
<dbReference type="GO" id="GO:0004160">
    <property type="term" value="F:dihydroxy-acid dehydratase activity"/>
    <property type="evidence" value="ECO:0007669"/>
    <property type="project" value="UniProtKB-UniRule"/>
</dbReference>
<dbReference type="GO" id="GO:0000287">
    <property type="term" value="F:magnesium ion binding"/>
    <property type="evidence" value="ECO:0007669"/>
    <property type="project" value="UniProtKB-UniRule"/>
</dbReference>
<dbReference type="GO" id="GO:0009097">
    <property type="term" value="P:isoleucine biosynthetic process"/>
    <property type="evidence" value="ECO:0007669"/>
    <property type="project" value="UniProtKB-UniRule"/>
</dbReference>
<dbReference type="GO" id="GO:0009099">
    <property type="term" value="P:L-valine biosynthetic process"/>
    <property type="evidence" value="ECO:0007669"/>
    <property type="project" value="UniProtKB-UniRule"/>
</dbReference>
<dbReference type="FunFam" id="3.50.30.80:FF:000001">
    <property type="entry name" value="Dihydroxy-acid dehydratase"/>
    <property type="match status" value="1"/>
</dbReference>
<dbReference type="Gene3D" id="3.50.30.80">
    <property type="entry name" value="IlvD/EDD C-terminal domain-like"/>
    <property type="match status" value="1"/>
</dbReference>
<dbReference type="HAMAP" id="MF_00012">
    <property type="entry name" value="IlvD"/>
    <property type="match status" value="1"/>
</dbReference>
<dbReference type="InterPro" id="IPR050165">
    <property type="entry name" value="DHAD_IlvD/Edd"/>
</dbReference>
<dbReference type="InterPro" id="IPR042096">
    <property type="entry name" value="Dihydro-acid_dehy_C"/>
</dbReference>
<dbReference type="InterPro" id="IPR004404">
    <property type="entry name" value="DihydroxyA_deHydtase"/>
</dbReference>
<dbReference type="InterPro" id="IPR020558">
    <property type="entry name" value="DiOHA_6PGluconate_deHydtase_CS"/>
</dbReference>
<dbReference type="InterPro" id="IPR056740">
    <property type="entry name" value="ILV_EDD_C"/>
</dbReference>
<dbReference type="InterPro" id="IPR000581">
    <property type="entry name" value="ILV_EDD_N"/>
</dbReference>
<dbReference type="InterPro" id="IPR037237">
    <property type="entry name" value="IlvD/EDD_N"/>
</dbReference>
<dbReference type="NCBIfam" id="TIGR00110">
    <property type="entry name" value="ilvD"/>
    <property type="match status" value="1"/>
</dbReference>
<dbReference type="NCBIfam" id="NF002068">
    <property type="entry name" value="PRK00911.1"/>
    <property type="match status" value="1"/>
</dbReference>
<dbReference type="PANTHER" id="PTHR21000">
    <property type="entry name" value="DIHYDROXY-ACID DEHYDRATASE DAD"/>
    <property type="match status" value="1"/>
</dbReference>
<dbReference type="PANTHER" id="PTHR21000:SF5">
    <property type="entry name" value="DIHYDROXY-ACID DEHYDRATASE, MITOCHONDRIAL"/>
    <property type="match status" value="1"/>
</dbReference>
<dbReference type="Pfam" id="PF24877">
    <property type="entry name" value="ILV_EDD_C"/>
    <property type="match status" value="1"/>
</dbReference>
<dbReference type="Pfam" id="PF00920">
    <property type="entry name" value="ILVD_EDD_N"/>
    <property type="match status" value="1"/>
</dbReference>
<dbReference type="SUPFAM" id="SSF143975">
    <property type="entry name" value="IlvD/EDD N-terminal domain-like"/>
    <property type="match status" value="1"/>
</dbReference>
<dbReference type="SUPFAM" id="SSF52016">
    <property type="entry name" value="LeuD/IlvD-like"/>
    <property type="match status" value="1"/>
</dbReference>
<dbReference type="PROSITE" id="PS00886">
    <property type="entry name" value="ILVD_EDD_1"/>
    <property type="match status" value="1"/>
</dbReference>
<dbReference type="PROSITE" id="PS00887">
    <property type="entry name" value="ILVD_EDD_2"/>
    <property type="match status" value="1"/>
</dbReference>
<accession>C3NLR8</accession>
<reference key="1">
    <citation type="journal article" date="2009" name="Proc. Natl. Acad. Sci. U.S.A.">
        <title>Biogeography of the Sulfolobus islandicus pan-genome.</title>
        <authorList>
            <person name="Reno M.L."/>
            <person name="Held N.L."/>
            <person name="Fields C.J."/>
            <person name="Burke P.V."/>
            <person name="Whitaker R.J."/>
        </authorList>
    </citation>
    <scope>NUCLEOTIDE SEQUENCE [LARGE SCALE GENOMIC DNA]</scope>
    <source>
        <strain>Y.N.15.51 / Yellowstone #2</strain>
    </source>
</reference>
<gene>
    <name evidence="1" type="primary">ilvD</name>
    <name type="ordered locus">YN1551_0517</name>
</gene>